<reference key="1">
    <citation type="submission" date="2007-06" db="EMBL/GenBank/DDBJ databases">
        <authorList>
            <person name="Brinkac L.M."/>
            <person name="Daugherty S."/>
            <person name="Dodson R.J."/>
            <person name="Madupu R."/>
            <person name="Brown J.L."/>
            <person name="Bruce D."/>
            <person name="Detter C."/>
            <person name="Munk C."/>
            <person name="Smith L.A."/>
            <person name="Smith T.J."/>
            <person name="White O."/>
            <person name="Brettin T.S."/>
        </authorList>
    </citation>
    <scope>NUCLEOTIDE SEQUENCE [LARGE SCALE GENOMIC DNA]</scope>
    <source>
        <strain>Langeland / NCTC 10281 / Type F</strain>
    </source>
</reference>
<accession>A7GIQ9</accession>
<sequence length="407" mass="46493">MSNVYDILKERGYIKQLTHEEEIRELLGKEKISFYIGFDPTADSLHVGHFLQMMVMAHMQKAGHRPIALVGGGTGMIGDPTGKTDMRKMMTKEQIEHNCNCFKKQLAKIIDFSEDKAIMVNNADWLLNLNYIEFLREIGVHFSVNKMLTAECFKSRLEKGLSFLEFNYMLMQGYDFLELNRKYNCVMELGGDDQWSNILAGVDLIRRKESKSAYGMTFTLLTNSEGKKMGKTESGALWLDPEKTSPYEFYQYWRNVADADVEKCLRLITFLPMDEVRRLSSLEGAEINEAKKVLAFEVTKLIHGEEEAQKAKIAAEALFGGNAKDLGNMPTAYIDKNDLNNLLVDLLVKCEIFPSKSEARRLIKQGGLYLNDEKVTDMNLVVTEEHVTEDGIMIRRGKKNFNRIVVE</sequence>
<dbReference type="EC" id="6.1.1.1" evidence="1"/>
<dbReference type="EMBL" id="CP000728">
    <property type="protein sequence ID" value="ABS40774.1"/>
    <property type="molecule type" value="Genomic_DNA"/>
</dbReference>
<dbReference type="RefSeq" id="WP_003357511.1">
    <property type="nucleotide sequence ID" value="NC_009699.1"/>
</dbReference>
<dbReference type="SMR" id="A7GIQ9"/>
<dbReference type="KEGG" id="cbf:CLI_3496"/>
<dbReference type="HOGENOM" id="CLU_024003_0_3_9"/>
<dbReference type="Proteomes" id="UP000002410">
    <property type="component" value="Chromosome"/>
</dbReference>
<dbReference type="GO" id="GO:0005829">
    <property type="term" value="C:cytosol"/>
    <property type="evidence" value="ECO:0007669"/>
    <property type="project" value="TreeGrafter"/>
</dbReference>
<dbReference type="GO" id="GO:0005524">
    <property type="term" value="F:ATP binding"/>
    <property type="evidence" value="ECO:0007669"/>
    <property type="project" value="UniProtKB-UniRule"/>
</dbReference>
<dbReference type="GO" id="GO:0003723">
    <property type="term" value="F:RNA binding"/>
    <property type="evidence" value="ECO:0007669"/>
    <property type="project" value="UniProtKB-KW"/>
</dbReference>
<dbReference type="GO" id="GO:0004831">
    <property type="term" value="F:tyrosine-tRNA ligase activity"/>
    <property type="evidence" value="ECO:0007669"/>
    <property type="project" value="UniProtKB-UniRule"/>
</dbReference>
<dbReference type="GO" id="GO:0006437">
    <property type="term" value="P:tyrosyl-tRNA aminoacylation"/>
    <property type="evidence" value="ECO:0007669"/>
    <property type="project" value="UniProtKB-UniRule"/>
</dbReference>
<dbReference type="CDD" id="cd00165">
    <property type="entry name" value="S4"/>
    <property type="match status" value="1"/>
</dbReference>
<dbReference type="CDD" id="cd00805">
    <property type="entry name" value="TyrRS_core"/>
    <property type="match status" value="1"/>
</dbReference>
<dbReference type="FunFam" id="1.10.240.10:FF:000001">
    <property type="entry name" value="Tyrosine--tRNA ligase"/>
    <property type="match status" value="1"/>
</dbReference>
<dbReference type="FunFam" id="3.10.290.10:FF:000022">
    <property type="entry name" value="Tyrosine--tRNA ligase"/>
    <property type="match status" value="1"/>
</dbReference>
<dbReference type="FunFam" id="3.40.50.620:FF:000008">
    <property type="entry name" value="Tyrosine--tRNA ligase"/>
    <property type="match status" value="1"/>
</dbReference>
<dbReference type="Gene3D" id="3.40.50.620">
    <property type="entry name" value="HUPs"/>
    <property type="match status" value="1"/>
</dbReference>
<dbReference type="Gene3D" id="3.10.290.10">
    <property type="entry name" value="RNA-binding S4 domain"/>
    <property type="match status" value="1"/>
</dbReference>
<dbReference type="Gene3D" id="1.10.240.10">
    <property type="entry name" value="Tyrosyl-Transfer RNA Synthetase"/>
    <property type="match status" value="1"/>
</dbReference>
<dbReference type="HAMAP" id="MF_02006">
    <property type="entry name" value="Tyr_tRNA_synth_type1"/>
    <property type="match status" value="1"/>
</dbReference>
<dbReference type="InterPro" id="IPR001412">
    <property type="entry name" value="aa-tRNA-synth_I_CS"/>
</dbReference>
<dbReference type="InterPro" id="IPR002305">
    <property type="entry name" value="aa-tRNA-synth_Ic"/>
</dbReference>
<dbReference type="InterPro" id="IPR014729">
    <property type="entry name" value="Rossmann-like_a/b/a_fold"/>
</dbReference>
<dbReference type="InterPro" id="IPR036986">
    <property type="entry name" value="S4_RNA-bd_sf"/>
</dbReference>
<dbReference type="InterPro" id="IPR054608">
    <property type="entry name" value="SYY-like_C"/>
</dbReference>
<dbReference type="InterPro" id="IPR002307">
    <property type="entry name" value="Tyr-tRNA-ligase"/>
</dbReference>
<dbReference type="InterPro" id="IPR024088">
    <property type="entry name" value="Tyr-tRNA-ligase_bac-type"/>
</dbReference>
<dbReference type="InterPro" id="IPR024107">
    <property type="entry name" value="Tyr-tRNA-ligase_bac_1"/>
</dbReference>
<dbReference type="NCBIfam" id="TIGR00234">
    <property type="entry name" value="tyrS"/>
    <property type="match status" value="1"/>
</dbReference>
<dbReference type="PANTHER" id="PTHR11766:SF0">
    <property type="entry name" value="TYROSINE--TRNA LIGASE, MITOCHONDRIAL"/>
    <property type="match status" value="1"/>
</dbReference>
<dbReference type="PANTHER" id="PTHR11766">
    <property type="entry name" value="TYROSYL-TRNA SYNTHETASE"/>
    <property type="match status" value="1"/>
</dbReference>
<dbReference type="Pfam" id="PF22421">
    <property type="entry name" value="SYY_C-terminal"/>
    <property type="match status" value="1"/>
</dbReference>
<dbReference type="Pfam" id="PF00579">
    <property type="entry name" value="tRNA-synt_1b"/>
    <property type="match status" value="1"/>
</dbReference>
<dbReference type="PRINTS" id="PR01040">
    <property type="entry name" value="TRNASYNTHTYR"/>
</dbReference>
<dbReference type="SUPFAM" id="SSF55174">
    <property type="entry name" value="Alpha-L RNA-binding motif"/>
    <property type="match status" value="1"/>
</dbReference>
<dbReference type="SUPFAM" id="SSF52374">
    <property type="entry name" value="Nucleotidylyl transferase"/>
    <property type="match status" value="1"/>
</dbReference>
<dbReference type="PROSITE" id="PS00178">
    <property type="entry name" value="AA_TRNA_LIGASE_I"/>
    <property type="match status" value="1"/>
</dbReference>
<dbReference type="PROSITE" id="PS50889">
    <property type="entry name" value="S4"/>
    <property type="match status" value="1"/>
</dbReference>
<comment type="function">
    <text evidence="1">Catalyzes the attachment of tyrosine to tRNA(Tyr) in a two-step reaction: tyrosine is first activated by ATP to form Tyr-AMP and then transferred to the acceptor end of tRNA(Tyr).</text>
</comment>
<comment type="catalytic activity">
    <reaction evidence="1">
        <text>tRNA(Tyr) + L-tyrosine + ATP = L-tyrosyl-tRNA(Tyr) + AMP + diphosphate + H(+)</text>
        <dbReference type="Rhea" id="RHEA:10220"/>
        <dbReference type="Rhea" id="RHEA-COMP:9706"/>
        <dbReference type="Rhea" id="RHEA-COMP:9707"/>
        <dbReference type="ChEBI" id="CHEBI:15378"/>
        <dbReference type="ChEBI" id="CHEBI:30616"/>
        <dbReference type="ChEBI" id="CHEBI:33019"/>
        <dbReference type="ChEBI" id="CHEBI:58315"/>
        <dbReference type="ChEBI" id="CHEBI:78442"/>
        <dbReference type="ChEBI" id="CHEBI:78536"/>
        <dbReference type="ChEBI" id="CHEBI:456215"/>
        <dbReference type="EC" id="6.1.1.1"/>
    </reaction>
</comment>
<comment type="subunit">
    <text evidence="1">Homodimer.</text>
</comment>
<comment type="subcellular location">
    <subcellularLocation>
        <location evidence="1">Cytoplasm</location>
    </subcellularLocation>
</comment>
<comment type="similarity">
    <text evidence="1">Belongs to the class-I aminoacyl-tRNA synthetase family. TyrS type 1 subfamily.</text>
</comment>
<evidence type="ECO:0000255" key="1">
    <source>
        <dbReference type="HAMAP-Rule" id="MF_02006"/>
    </source>
</evidence>
<protein>
    <recommendedName>
        <fullName evidence="1">Tyrosine--tRNA ligase</fullName>
        <ecNumber evidence="1">6.1.1.1</ecNumber>
    </recommendedName>
    <alternativeName>
        <fullName evidence="1">Tyrosyl-tRNA synthetase</fullName>
        <shortName evidence="1">TyrRS</shortName>
    </alternativeName>
</protein>
<name>SYY_CLOBL</name>
<feature type="chain" id="PRO_1000189278" description="Tyrosine--tRNA ligase">
    <location>
        <begin position="1"/>
        <end position="407"/>
    </location>
</feature>
<feature type="domain" description="S4 RNA-binding" evidence="1">
    <location>
        <begin position="341"/>
        <end position="405"/>
    </location>
</feature>
<feature type="short sequence motif" description="'HIGH' region">
    <location>
        <begin position="40"/>
        <end position="49"/>
    </location>
</feature>
<feature type="short sequence motif" description="'KMSKS' region">
    <location>
        <begin position="228"/>
        <end position="232"/>
    </location>
</feature>
<feature type="binding site" evidence="1">
    <location>
        <position position="35"/>
    </location>
    <ligand>
        <name>L-tyrosine</name>
        <dbReference type="ChEBI" id="CHEBI:58315"/>
    </ligand>
</feature>
<feature type="binding site" evidence="1">
    <location>
        <position position="168"/>
    </location>
    <ligand>
        <name>L-tyrosine</name>
        <dbReference type="ChEBI" id="CHEBI:58315"/>
    </ligand>
</feature>
<feature type="binding site" evidence="1">
    <location>
        <position position="172"/>
    </location>
    <ligand>
        <name>L-tyrosine</name>
        <dbReference type="ChEBI" id="CHEBI:58315"/>
    </ligand>
</feature>
<feature type="binding site" evidence="1">
    <location>
        <position position="231"/>
    </location>
    <ligand>
        <name>ATP</name>
        <dbReference type="ChEBI" id="CHEBI:30616"/>
    </ligand>
</feature>
<gene>
    <name evidence="1" type="primary">tyrS</name>
    <name type="ordered locus">CLI_3496</name>
</gene>
<keyword id="KW-0030">Aminoacyl-tRNA synthetase</keyword>
<keyword id="KW-0067">ATP-binding</keyword>
<keyword id="KW-0963">Cytoplasm</keyword>
<keyword id="KW-0436">Ligase</keyword>
<keyword id="KW-0547">Nucleotide-binding</keyword>
<keyword id="KW-0648">Protein biosynthesis</keyword>
<keyword id="KW-0694">RNA-binding</keyword>
<proteinExistence type="inferred from homology"/>
<organism>
    <name type="scientific">Clostridium botulinum (strain Langeland / NCTC 10281 / Type F)</name>
    <dbReference type="NCBI Taxonomy" id="441772"/>
    <lineage>
        <taxon>Bacteria</taxon>
        <taxon>Bacillati</taxon>
        <taxon>Bacillota</taxon>
        <taxon>Clostridia</taxon>
        <taxon>Eubacteriales</taxon>
        <taxon>Clostridiaceae</taxon>
        <taxon>Clostridium</taxon>
    </lineage>
</organism>